<accession>P50723</accession>
<protein>
    <recommendedName>
        <fullName>Hyphancin-3G</fullName>
    </recommendedName>
    <alternativeName>
        <fullName>Cecropin-A3</fullName>
    </alternativeName>
    <alternativeName>
        <fullName>Hyphancin-IIIG</fullName>
    </alternativeName>
</protein>
<proteinExistence type="inferred from homology"/>
<evidence type="ECO:0000255" key="1"/>
<evidence type="ECO:0000305" key="2"/>
<reference key="1">
    <citation type="submission" date="1995-03" db="EMBL/GenBank/DDBJ databases">
        <authorList>
            <person name="Park S.-S."/>
            <person name="Shin S.W."/>
            <person name="Kim M.K."/>
            <person name="Park D.S."/>
            <person name="Oh H.W."/>
            <person name="Park H.Y."/>
        </authorList>
    </citation>
    <scope>NUCLEOTIDE SEQUENCE [MRNA]</scope>
</reference>
<dbReference type="EMBL" id="U23834">
    <property type="protein sequence ID" value="AAB39003.1"/>
    <property type="molecule type" value="mRNA"/>
</dbReference>
<dbReference type="SMR" id="P50723"/>
<dbReference type="GO" id="GO:0005576">
    <property type="term" value="C:extracellular region"/>
    <property type="evidence" value="ECO:0007669"/>
    <property type="project" value="UniProtKB-SubCell"/>
</dbReference>
<dbReference type="GO" id="GO:0019731">
    <property type="term" value="P:antibacterial humoral response"/>
    <property type="evidence" value="ECO:0007669"/>
    <property type="project" value="InterPro"/>
</dbReference>
<dbReference type="GO" id="GO:0050830">
    <property type="term" value="P:defense response to Gram-positive bacterium"/>
    <property type="evidence" value="ECO:0007669"/>
    <property type="project" value="UniProtKB-ARBA"/>
</dbReference>
<dbReference type="GO" id="GO:0045087">
    <property type="term" value="P:innate immune response"/>
    <property type="evidence" value="ECO:0007669"/>
    <property type="project" value="UniProtKB-KW"/>
</dbReference>
<dbReference type="InterPro" id="IPR000875">
    <property type="entry name" value="Cecropin"/>
</dbReference>
<dbReference type="Pfam" id="PF00272">
    <property type="entry name" value="Cecropin"/>
    <property type="match status" value="1"/>
</dbReference>
<dbReference type="PROSITE" id="PS00268">
    <property type="entry name" value="CECROPIN"/>
    <property type="match status" value="1"/>
</dbReference>
<comment type="function">
    <text>Has antibacterial activity.</text>
</comment>
<comment type="subcellular location">
    <subcellularLocation>
        <location>Secreted</location>
    </subcellularLocation>
</comment>
<comment type="similarity">
    <text evidence="2">Belongs to the cecropin family.</text>
</comment>
<name>CE3G_HYPCU</name>
<organism>
    <name type="scientific">Hyphantria cunea</name>
    <name type="common">Fall webworm moth</name>
    <name type="synonym">Phalaena cunea</name>
    <dbReference type="NCBI Taxonomy" id="39466"/>
    <lineage>
        <taxon>Eukaryota</taxon>
        <taxon>Metazoa</taxon>
        <taxon>Ecdysozoa</taxon>
        <taxon>Arthropoda</taxon>
        <taxon>Hexapoda</taxon>
        <taxon>Insecta</taxon>
        <taxon>Pterygota</taxon>
        <taxon>Neoptera</taxon>
        <taxon>Endopterygota</taxon>
        <taxon>Lepidoptera</taxon>
        <taxon>Glossata</taxon>
        <taxon>Ditrysia</taxon>
        <taxon>Noctuoidea</taxon>
        <taxon>Erebidae</taxon>
        <taxon>Arctiinae</taxon>
        <taxon>Hyphantria</taxon>
    </lineage>
</organism>
<keyword id="KW-0027">Amidation</keyword>
<keyword id="KW-0044">Antibiotic</keyword>
<keyword id="KW-0929">Antimicrobial</keyword>
<keyword id="KW-0391">Immunity</keyword>
<keyword id="KW-0399">Innate immunity</keyword>
<keyword id="KW-0964">Secreted</keyword>
<keyword id="KW-0732">Signal</keyword>
<sequence>MNFSRILFFMFACFVALASVSAVPEPRWKVFKKIEKVGRHIRDGVIKAGPAITVVGQATALGK</sequence>
<feature type="signal peptide" evidence="1">
    <location>
        <begin position="1"/>
        <end position="22"/>
    </location>
</feature>
<feature type="propeptide" id="PRO_0000004871" description="Removed by a dipeptidylpeptidase" evidence="1">
    <location>
        <begin position="23"/>
        <end position="26"/>
    </location>
</feature>
<feature type="chain" id="PRO_0000004872" description="Hyphancin-3G">
    <location>
        <begin position="27"/>
        <end position="61"/>
    </location>
</feature>
<feature type="modified residue" description="Leucine amide" evidence="1">
    <location>
        <position position="61"/>
    </location>
</feature>